<proteinExistence type="evidence at transcript level"/>
<organism>
    <name type="scientific">Pan troglodytes</name>
    <name type="common">Chimpanzee</name>
    <dbReference type="NCBI Taxonomy" id="9598"/>
    <lineage>
        <taxon>Eukaryota</taxon>
        <taxon>Metazoa</taxon>
        <taxon>Chordata</taxon>
        <taxon>Craniata</taxon>
        <taxon>Vertebrata</taxon>
        <taxon>Euteleostomi</taxon>
        <taxon>Mammalia</taxon>
        <taxon>Eutheria</taxon>
        <taxon>Euarchontoglires</taxon>
        <taxon>Primates</taxon>
        <taxon>Haplorrhini</taxon>
        <taxon>Catarrhini</taxon>
        <taxon>Hominidae</taxon>
        <taxon>Pan</taxon>
    </lineage>
</organism>
<protein>
    <recommendedName>
        <fullName>Zinc phosphodiesterase ELAC protein 2</fullName>
        <ecNumber>3.1.26.11</ecNumber>
    </recommendedName>
    <alternativeName>
        <fullName>ElaC homolog protein 2</fullName>
    </alternativeName>
    <alternativeName>
        <fullName>Ribonuclease Z 2</fullName>
        <shortName>RNase Z 2</shortName>
    </alternativeName>
    <alternativeName>
        <fullName>tRNA 3 endonuclease 2</fullName>
    </alternativeName>
    <alternativeName>
        <fullName>tRNase Z 2</fullName>
    </alternativeName>
</protein>
<comment type="function">
    <text evidence="2">Zinc phosphodiesterase, which displays mitochondrial tRNA 3'-processing endonuclease activity. Involved in tRNA maturation, by removing a 3'-trailer from precursor tRNA. Associates with mitochondrial DNA complexes at the nucleoids to initiate RNA processing and ribosome assembly.</text>
</comment>
<comment type="catalytic activity">
    <reaction evidence="2">
        <text>Endonucleolytic cleavage of RNA, removing extra 3' nucleotides from tRNA precursor, generating 3' termini of tRNAs. A 3'-hydroxy group is left at the tRNA terminus and a 5'-phosphoryl group is left at the trailer molecule.</text>
        <dbReference type="EC" id="3.1.26.11"/>
    </reaction>
</comment>
<comment type="cofactor">
    <cofactor evidence="5">
        <name>Zn(2+)</name>
        <dbReference type="ChEBI" id="CHEBI:29105"/>
    </cofactor>
</comment>
<comment type="subunit">
    <text evidence="1">Homodimer. Interacts with PTCD1.</text>
</comment>
<comment type="subcellular location">
    <subcellularLocation>
        <location evidence="2">Mitochondrion</location>
    </subcellularLocation>
    <subcellularLocation>
        <location evidence="2">Mitochondrion matrix</location>
        <location evidence="2">Mitochondrion nucleoid</location>
    </subcellularLocation>
    <subcellularLocation>
        <location evidence="2">Nucleus</location>
    </subcellularLocation>
    <text evidence="2">Mainly mitochondrial.</text>
</comment>
<comment type="similarity">
    <text evidence="5">Belongs to the RNase Z family.</text>
</comment>
<evidence type="ECO:0000250" key="1"/>
<evidence type="ECO:0000250" key="2">
    <source>
        <dbReference type="UniProtKB" id="Q9BQ52"/>
    </source>
</evidence>
<evidence type="ECO:0000255" key="3"/>
<evidence type="ECO:0000256" key="4">
    <source>
        <dbReference type="SAM" id="MobiDB-lite"/>
    </source>
</evidence>
<evidence type="ECO:0000305" key="5"/>
<sequence length="826" mass="92324">MWALCSLLRSAAGRTMSQGRTISQAPARRERPRKDPLRHLRTREKRGPSGCSGGPNTVYLQVVAAGSRDSGAALYVFSEFNRYLFNCGEGIQRLMQEHKLKVARLDNIFLTRMHWSNVGGLSGMILTLKETGLPKCVLSGPPQLEKYLEAIKIFSGPLKGIELAVRPHSAPEYEDETMTVYQIPIHSEQRRGKHQPWQSPERPLSRLSPERSSDSESNENEPHLPHGVSQRRGVRDSSLVVAFICKLHLKRGNFLVLKAKEMGLPVGTAAIAPIIAAVKDGKSITHEGREILAEELCTPPDPGAAFVVVECPDESFIQPICENATFQRYQGKADAPVALVVHMAPESVLVDSRYQQWMERFGPDTQHLVLNENCASVHNLRSHKIQTQLNLIHPDIFPLLTSFPCKKEGPTLSVPMVQGECLLKYQLRPRREWQRDAIITCNPEEFIIEALQLPNFQQSVQEYRRSAQDGPAPAEKRSQYPEIIFLGTGSAIPMKIRNVSATLVNISPDTSLLLDCGEGTFGQLCRHYGDQVDRVLGTLAAVFVSHLHADHHTGLLNILLQRERALASLGKPFHPLLVVAPNQLKAWLQQYHNQCQEVLHHISMIPAKCLQEGAEISSPAVERLISSLLRTCDLEEFQTCLVRHCKHAFGCALVHTSGWKVVYSGDTMPCEALVRMGKDATLLIHEATLEDGLEEEAVEKTHSTTSQAISVGMRMNAEFIMLNHFSQRYAKVPLFSPNFNEKVGVAFDHMKVCFGDFATMPKLIPPLKALFAGDIEEMEERREKRELRQVRAALLSRELAGGLEDGEPQQKRAHTEEPQAKKVRAQ</sequence>
<gene>
    <name type="primary">ELAC2</name>
</gene>
<reference key="1">
    <citation type="journal article" date="2001" name="Nat. Genet.">
        <title>A candidate prostate cancer susceptibility gene at chromosome 17p.</title>
        <authorList>
            <person name="Tavtigian S.V."/>
            <person name="Simard J."/>
            <person name="Teng D.H.F."/>
            <person name="Abtin V."/>
            <person name="Baumgard M."/>
            <person name="Beck A."/>
            <person name="Camp N.J."/>
            <person name="Carillo A.R."/>
            <person name="Chen Y."/>
            <person name="Dayananth P."/>
            <person name="Desrochers M."/>
            <person name="Dumont M."/>
            <person name="Farnham J.M."/>
            <person name="Frank D."/>
            <person name="Frye C."/>
            <person name="Ghaffari S."/>
            <person name="Gupte J.S."/>
            <person name="Hu R."/>
            <person name="Iliev D."/>
            <person name="Janecki T."/>
            <person name="Kort E.N."/>
            <person name="Laity K.E."/>
            <person name="Leavitt A."/>
            <person name="Leblanc G."/>
            <person name="McArthur-Morrison J."/>
            <person name="Pederson A."/>
            <person name="Penn B."/>
            <person name="Peterson K.T."/>
            <person name="Reid J.E."/>
            <person name="Richards S."/>
            <person name="Schroeder M."/>
            <person name="Smith R."/>
            <person name="Snyder S.C."/>
            <person name="Swedlund B."/>
            <person name="Swensen J."/>
            <person name="Thomas A."/>
            <person name="Tranchant M."/>
            <person name="Woodland A.-M."/>
            <person name="Labrie F."/>
            <person name="Skolnick M.H."/>
            <person name="Neuhausen S."/>
            <person name="Rommens J."/>
            <person name="Cannon-Albright L.A."/>
        </authorList>
    </citation>
    <scope>NUCLEOTIDE SEQUENCE [MRNA]</scope>
</reference>
<accession>Q9GL72</accession>
<feature type="transit peptide" description="Mitochondrion" evidence="3">
    <location>
        <begin position="1"/>
        <end position="16"/>
    </location>
</feature>
<feature type="chain" id="PRO_0000155831" description="Zinc phosphodiesterase ELAC protein 2">
    <location>
        <begin position="17"/>
        <end position="826"/>
    </location>
</feature>
<feature type="region of interest" description="Disordered" evidence="4">
    <location>
        <begin position="16"/>
        <end position="51"/>
    </location>
</feature>
<feature type="region of interest" description="Disordered" evidence="4">
    <location>
        <begin position="188"/>
        <end position="231"/>
    </location>
</feature>
<feature type="region of interest" description="Disordered" evidence="4">
    <location>
        <begin position="798"/>
        <end position="826"/>
    </location>
</feature>
<feature type="compositionally biased region" description="Basic and acidic residues" evidence="4">
    <location>
        <begin position="27"/>
        <end position="38"/>
    </location>
</feature>
<feature type="compositionally biased region" description="Basic and acidic residues" evidence="4">
    <location>
        <begin position="208"/>
        <end position="224"/>
    </location>
</feature>
<feature type="compositionally biased region" description="Basic and acidic residues" evidence="4">
    <location>
        <begin position="808"/>
        <end position="820"/>
    </location>
</feature>
<feature type="modified residue" description="Phosphoserine" evidence="2">
    <location>
        <position position="199"/>
    </location>
</feature>
<feature type="modified residue" description="Phosphoserine" evidence="2">
    <location>
        <position position="208"/>
    </location>
</feature>
<feature type="modified residue" description="Phosphoserine" evidence="2">
    <location>
        <position position="212"/>
    </location>
</feature>
<feature type="modified residue" description="Phosphoserine" evidence="2">
    <location>
        <position position="229"/>
    </location>
</feature>
<feature type="modified residue" description="Phosphoserine" evidence="2">
    <location>
        <position position="618"/>
    </location>
</feature>
<feature type="modified residue" description="Phosphoserine" evidence="2">
    <location>
        <position position="736"/>
    </location>
</feature>
<keyword id="KW-0255">Endonuclease</keyword>
<keyword id="KW-0378">Hydrolase</keyword>
<keyword id="KW-0479">Metal-binding</keyword>
<keyword id="KW-0496">Mitochondrion</keyword>
<keyword id="KW-1135">Mitochondrion nucleoid</keyword>
<keyword id="KW-0540">Nuclease</keyword>
<keyword id="KW-0539">Nucleus</keyword>
<keyword id="KW-0597">Phosphoprotein</keyword>
<keyword id="KW-1185">Reference proteome</keyword>
<keyword id="KW-0809">Transit peptide</keyword>
<keyword id="KW-0819">tRNA processing</keyword>
<keyword id="KW-0862">Zinc</keyword>
<name>RNZ2_PANTR</name>
<dbReference type="EC" id="3.1.26.11"/>
<dbReference type="EMBL" id="AF308698">
    <property type="protein sequence ID" value="AAG24920.1"/>
    <property type="molecule type" value="mRNA"/>
</dbReference>
<dbReference type="RefSeq" id="NP_001009034.1">
    <property type="nucleotide sequence ID" value="NM_001009034.1"/>
</dbReference>
<dbReference type="SMR" id="Q9GL72"/>
<dbReference type="FunCoup" id="Q9GL72">
    <property type="interactions" value="3563"/>
</dbReference>
<dbReference type="STRING" id="9598.ENSPTRP00000081112"/>
<dbReference type="PaxDb" id="9598-ENSPTRP00000014982"/>
<dbReference type="Ensembl" id="ENSPTRT00000090099.1">
    <property type="protein sequence ID" value="ENSPTRP00000081112.1"/>
    <property type="gene ID" value="ENSPTRG00000008788.5"/>
</dbReference>
<dbReference type="GeneID" id="450109"/>
<dbReference type="KEGG" id="ptr:450109"/>
<dbReference type="CTD" id="60528"/>
<dbReference type="VGNC" id="VGNC:9459">
    <property type="gene designation" value="ELAC2"/>
</dbReference>
<dbReference type="eggNOG" id="KOG2121">
    <property type="taxonomic scope" value="Eukaryota"/>
</dbReference>
<dbReference type="GeneTree" id="ENSGT00730000111191"/>
<dbReference type="HOGENOM" id="CLU_006220_2_0_1"/>
<dbReference type="InParanoid" id="Q9GL72"/>
<dbReference type="OMA" id="INYICQL"/>
<dbReference type="OrthoDB" id="6495at9604"/>
<dbReference type="TreeFam" id="TF105797"/>
<dbReference type="Proteomes" id="UP000002277">
    <property type="component" value="Chromosome 17"/>
</dbReference>
<dbReference type="Bgee" id="ENSPTRG00000008788">
    <property type="expression patterns" value="Expressed in hindlimb stylopod muscle and 21 other cell types or tissues"/>
</dbReference>
<dbReference type="GO" id="GO:0042645">
    <property type="term" value="C:mitochondrial nucleoid"/>
    <property type="evidence" value="ECO:0000250"/>
    <property type="project" value="UniProtKB"/>
</dbReference>
<dbReference type="GO" id="GO:0005739">
    <property type="term" value="C:mitochondrion"/>
    <property type="evidence" value="ECO:0000250"/>
    <property type="project" value="UniProtKB"/>
</dbReference>
<dbReference type="GO" id="GO:0005654">
    <property type="term" value="C:nucleoplasm"/>
    <property type="evidence" value="ECO:0007669"/>
    <property type="project" value="Ensembl"/>
</dbReference>
<dbReference type="GO" id="GO:0005634">
    <property type="term" value="C:nucleus"/>
    <property type="evidence" value="ECO:0000250"/>
    <property type="project" value="UniProtKB"/>
</dbReference>
<dbReference type="GO" id="GO:0042781">
    <property type="term" value="F:3'-tRNA processing endoribonuclease activity"/>
    <property type="evidence" value="ECO:0000318"/>
    <property type="project" value="GO_Central"/>
</dbReference>
<dbReference type="GO" id="GO:0046872">
    <property type="term" value="F:metal ion binding"/>
    <property type="evidence" value="ECO:0007669"/>
    <property type="project" value="UniProtKB-KW"/>
</dbReference>
<dbReference type="GO" id="GO:1990180">
    <property type="term" value="P:mitochondrial tRNA 3'-end processing"/>
    <property type="evidence" value="ECO:0000250"/>
    <property type="project" value="UniProtKB"/>
</dbReference>
<dbReference type="CDD" id="cd07718">
    <property type="entry name" value="RNaseZ_ELAC1_ELAC2-C-term-like_MBL-fold"/>
    <property type="match status" value="1"/>
</dbReference>
<dbReference type="CDD" id="cd16296">
    <property type="entry name" value="RNaseZ_ELAC2-N-term-like_MBL-fold"/>
    <property type="match status" value="1"/>
</dbReference>
<dbReference type="FunFam" id="3.60.15.10:FF:000014">
    <property type="entry name" value="Zinc phosphodiesterase ELAC protein 2"/>
    <property type="match status" value="1"/>
</dbReference>
<dbReference type="Gene3D" id="3.60.15.10">
    <property type="entry name" value="Ribonuclease Z/Hydroxyacylglutathione hydrolase-like"/>
    <property type="match status" value="2"/>
</dbReference>
<dbReference type="InterPro" id="IPR001279">
    <property type="entry name" value="Metallo-B-lactamas"/>
</dbReference>
<dbReference type="InterPro" id="IPR036866">
    <property type="entry name" value="RibonucZ/Hydroxyglut_hydro"/>
</dbReference>
<dbReference type="InterPro" id="IPR047151">
    <property type="entry name" value="RNZ2-like"/>
</dbReference>
<dbReference type="InterPro" id="IPR027794">
    <property type="entry name" value="tRNase_Z_dom"/>
</dbReference>
<dbReference type="PANTHER" id="PTHR12553">
    <property type="entry name" value="ZINC PHOSPHODIESTERASE ELAC PROTEIN 2"/>
    <property type="match status" value="1"/>
</dbReference>
<dbReference type="PANTHER" id="PTHR12553:SF49">
    <property type="entry name" value="ZINC PHOSPHODIESTERASE ELAC PROTEIN 2"/>
    <property type="match status" value="1"/>
</dbReference>
<dbReference type="Pfam" id="PF12706">
    <property type="entry name" value="Lactamase_B_2"/>
    <property type="match status" value="1"/>
</dbReference>
<dbReference type="Pfam" id="PF13691">
    <property type="entry name" value="Lactamase_B_4"/>
    <property type="match status" value="1"/>
</dbReference>
<dbReference type="SUPFAM" id="SSF56281">
    <property type="entry name" value="Metallo-hydrolase/oxidoreductase"/>
    <property type="match status" value="2"/>
</dbReference>